<protein>
    <recommendedName>
        <fullName evidence="1">Membrane-bound lytic murein transglycosylase C</fullName>
        <ecNumber evidence="1">4.2.2.n1</ecNumber>
    </recommendedName>
    <alternativeName>
        <fullName evidence="1">Murein lyase C</fullName>
    </alternativeName>
</protein>
<evidence type="ECO:0000255" key="1">
    <source>
        <dbReference type="HAMAP-Rule" id="MF_01616"/>
    </source>
</evidence>
<evidence type="ECO:0000305" key="2"/>
<organism>
    <name type="scientific">Yersinia pestis bv. Antiqua (strain Antiqua)</name>
    <dbReference type="NCBI Taxonomy" id="360102"/>
    <lineage>
        <taxon>Bacteria</taxon>
        <taxon>Pseudomonadati</taxon>
        <taxon>Pseudomonadota</taxon>
        <taxon>Gammaproteobacteria</taxon>
        <taxon>Enterobacterales</taxon>
        <taxon>Yersiniaceae</taxon>
        <taxon>Yersinia</taxon>
    </lineage>
</organism>
<proteinExistence type="inferred from homology"/>
<accession>Q1CB94</accession>
<sequence>MKKILALLVIAPLLVSCSGNKNQVENEVFVKDTNGFEILMGQFAHNIENIWGLKEVLIAGPKDYVKYTDQYQTRSHINFDAGTITIETIATTNPAAHLRQAIITTLLMGDDPGSIDLYSDVNDIQISKEPFLYGQVLDNNGEPIRWEWRAAHFADYLLQNKMQTRTSGLHVISFVTIQLVPNHLDKRAHKYLPLVRKSAARYGVEESLILAIMQTESSFNPYAVSRSDALGLMQVVQHTAGKDVFKLKGKSGQPSRSYLFDPENNIDAGTAYLSILQNTYLGGIQNATSRRYAVITSYNGGAGSVLRVFHSDKNKAVGIINTMSPGDVFQTLTTKHPSGESRRYLVKVNSAQKNYRRY</sequence>
<name>MLTC_YERPA</name>
<dbReference type="EC" id="4.2.2.n1" evidence="1"/>
<dbReference type="EMBL" id="CP000308">
    <property type="protein sequence ID" value="ABG12278.1"/>
    <property type="status" value="ALT_INIT"/>
    <property type="molecule type" value="Genomic_DNA"/>
</dbReference>
<dbReference type="RefSeq" id="WP_002209995.1">
    <property type="nucleotide sequence ID" value="NZ_CP009906.1"/>
</dbReference>
<dbReference type="SMR" id="Q1CB94"/>
<dbReference type="CAZy" id="GH23">
    <property type="family name" value="Glycoside Hydrolase Family 23"/>
</dbReference>
<dbReference type="GeneID" id="57973687"/>
<dbReference type="KEGG" id="ypa:YPA_0310"/>
<dbReference type="Proteomes" id="UP000001971">
    <property type="component" value="Chromosome"/>
</dbReference>
<dbReference type="GO" id="GO:0009279">
    <property type="term" value="C:cell outer membrane"/>
    <property type="evidence" value="ECO:0007669"/>
    <property type="project" value="UniProtKB-SubCell"/>
</dbReference>
<dbReference type="GO" id="GO:0016798">
    <property type="term" value="F:hydrolase activity, acting on glycosyl bonds"/>
    <property type="evidence" value="ECO:0007669"/>
    <property type="project" value="InterPro"/>
</dbReference>
<dbReference type="GO" id="GO:0008933">
    <property type="term" value="F:peptidoglycan lytic transglycosylase activity"/>
    <property type="evidence" value="ECO:0007669"/>
    <property type="project" value="UniProtKB-UniRule"/>
</dbReference>
<dbReference type="GO" id="GO:0016998">
    <property type="term" value="P:cell wall macromolecule catabolic process"/>
    <property type="evidence" value="ECO:0007669"/>
    <property type="project" value="UniProtKB-UniRule"/>
</dbReference>
<dbReference type="GO" id="GO:0071555">
    <property type="term" value="P:cell wall organization"/>
    <property type="evidence" value="ECO:0007669"/>
    <property type="project" value="UniProtKB-KW"/>
</dbReference>
<dbReference type="GO" id="GO:0000270">
    <property type="term" value="P:peptidoglycan metabolic process"/>
    <property type="evidence" value="ECO:0007669"/>
    <property type="project" value="InterPro"/>
</dbReference>
<dbReference type="CDD" id="cd16893">
    <property type="entry name" value="LT_MltC_MltE"/>
    <property type="match status" value="1"/>
</dbReference>
<dbReference type="FunFam" id="1.10.530.10:FF:000002">
    <property type="entry name" value="Membrane-bound lytic murein transglycosylase C"/>
    <property type="match status" value="1"/>
</dbReference>
<dbReference type="Gene3D" id="1.10.530.10">
    <property type="match status" value="1"/>
</dbReference>
<dbReference type="HAMAP" id="MF_01616">
    <property type="entry name" value="MltC"/>
    <property type="match status" value="1"/>
</dbReference>
<dbReference type="InterPro" id="IPR023346">
    <property type="entry name" value="Lysozyme-like_dom_sf"/>
</dbReference>
<dbReference type="InterPro" id="IPR023664">
    <property type="entry name" value="Murein_transglycosylaseC"/>
</dbReference>
<dbReference type="InterPro" id="IPR024570">
    <property type="entry name" value="Murein_transglycosylaseC_N"/>
</dbReference>
<dbReference type="InterPro" id="IPR000189">
    <property type="entry name" value="Transglyc_AS"/>
</dbReference>
<dbReference type="InterPro" id="IPR008258">
    <property type="entry name" value="Transglycosylase_SLT_dom_1"/>
</dbReference>
<dbReference type="NCBIfam" id="NF008670">
    <property type="entry name" value="PRK11671.1"/>
    <property type="match status" value="1"/>
</dbReference>
<dbReference type="PANTHER" id="PTHR37423:SF2">
    <property type="entry name" value="MEMBRANE-BOUND LYTIC MUREIN TRANSGLYCOSYLASE C"/>
    <property type="match status" value="1"/>
</dbReference>
<dbReference type="PANTHER" id="PTHR37423">
    <property type="entry name" value="SOLUBLE LYTIC MUREIN TRANSGLYCOSYLASE-RELATED"/>
    <property type="match status" value="1"/>
</dbReference>
<dbReference type="Pfam" id="PF11873">
    <property type="entry name" value="Mltc_N"/>
    <property type="match status" value="1"/>
</dbReference>
<dbReference type="Pfam" id="PF01464">
    <property type="entry name" value="SLT"/>
    <property type="match status" value="1"/>
</dbReference>
<dbReference type="SUPFAM" id="SSF53955">
    <property type="entry name" value="Lysozyme-like"/>
    <property type="match status" value="1"/>
</dbReference>
<dbReference type="PROSITE" id="PS51257">
    <property type="entry name" value="PROKAR_LIPOPROTEIN"/>
    <property type="match status" value="1"/>
</dbReference>
<dbReference type="PROSITE" id="PS00922">
    <property type="entry name" value="TRANSGLYCOSYLASE"/>
    <property type="match status" value="1"/>
</dbReference>
<reference key="1">
    <citation type="journal article" date="2006" name="J. Bacteriol.">
        <title>Complete genome sequence of Yersinia pestis strains Antiqua and Nepal516: evidence of gene reduction in an emerging pathogen.</title>
        <authorList>
            <person name="Chain P.S.G."/>
            <person name="Hu P."/>
            <person name="Malfatti S.A."/>
            <person name="Radnedge L."/>
            <person name="Larimer F."/>
            <person name="Vergez L.M."/>
            <person name="Worsham P."/>
            <person name="Chu M.C."/>
            <person name="Andersen G.L."/>
        </authorList>
    </citation>
    <scope>NUCLEOTIDE SEQUENCE [LARGE SCALE GENOMIC DNA]</scope>
    <source>
        <strain>Antiqua</strain>
    </source>
</reference>
<keyword id="KW-0998">Cell outer membrane</keyword>
<keyword id="KW-0961">Cell wall biogenesis/degradation</keyword>
<keyword id="KW-0449">Lipoprotein</keyword>
<keyword id="KW-0456">Lyase</keyword>
<keyword id="KW-0472">Membrane</keyword>
<keyword id="KW-0564">Palmitate</keyword>
<keyword id="KW-0732">Signal</keyword>
<gene>
    <name evidence="1" type="primary">mltC</name>
    <name type="ordered locus">YPA_0310</name>
</gene>
<feature type="signal peptide" evidence="1">
    <location>
        <begin position="1"/>
        <end position="16"/>
    </location>
</feature>
<feature type="chain" id="PRO_0000323522" description="Membrane-bound lytic murein transglycosylase C">
    <location>
        <begin position="17"/>
        <end position="358"/>
    </location>
</feature>
<feature type="lipid moiety-binding region" description="N-palmitoyl cysteine" evidence="1">
    <location>
        <position position="17"/>
    </location>
</feature>
<feature type="lipid moiety-binding region" description="S-diacylglycerol cysteine" evidence="1">
    <location>
        <position position="17"/>
    </location>
</feature>
<comment type="function">
    <text evidence="1">Murein-degrading enzyme. May play a role in recycling of muropeptides during cell elongation and/or cell division.</text>
</comment>
<comment type="catalytic activity">
    <reaction evidence="1">
        <text>Exolytic cleavage of the (1-&gt;4)-beta-glycosidic linkage between N-acetylmuramic acid (MurNAc) and N-acetylglucosamine (GlcNAc) residues in peptidoglycan, from either the reducing or the non-reducing ends of the peptidoglycan chains, with concomitant formation of a 1,6-anhydrobond in the MurNAc residue.</text>
        <dbReference type="EC" id="4.2.2.n1"/>
    </reaction>
</comment>
<comment type="subcellular location">
    <subcellularLocation>
        <location evidence="1">Cell outer membrane</location>
        <topology evidence="1">Lipid-anchor</topology>
    </subcellularLocation>
</comment>
<comment type="similarity">
    <text evidence="1">Belongs to the transglycosylase Slt family.</text>
</comment>
<comment type="sequence caution" evidence="2">
    <conflict type="erroneous initiation">
        <sequence resource="EMBL-CDS" id="ABG12278"/>
    </conflict>
</comment>